<feature type="chain" id="PRO_0000090929" description="Elongation factor 1-alpha">
    <location>
        <begin position="1"/>
        <end position="446"/>
    </location>
</feature>
<feature type="domain" description="tr-type G">
    <location>
        <begin position="5"/>
        <end position="230"/>
    </location>
</feature>
<feature type="region of interest" description="G1" evidence="1">
    <location>
        <begin position="14"/>
        <end position="21"/>
    </location>
</feature>
<feature type="region of interest" description="G2" evidence="1">
    <location>
        <begin position="70"/>
        <end position="74"/>
    </location>
</feature>
<feature type="region of interest" description="G3" evidence="1">
    <location>
        <begin position="91"/>
        <end position="94"/>
    </location>
</feature>
<feature type="region of interest" description="G4" evidence="1">
    <location>
        <begin position="153"/>
        <end position="156"/>
    </location>
</feature>
<feature type="region of interest" description="G5" evidence="1">
    <location>
        <begin position="194"/>
        <end position="196"/>
    </location>
</feature>
<feature type="binding site" evidence="1">
    <location>
        <begin position="14"/>
        <end position="21"/>
    </location>
    <ligand>
        <name>GTP</name>
        <dbReference type="ChEBI" id="CHEBI:37565"/>
    </ligand>
</feature>
<feature type="binding site" evidence="1">
    <location>
        <begin position="91"/>
        <end position="95"/>
    </location>
    <ligand>
        <name>GTP</name>
        <dbReference type="ChEBI" id="CHEBI:37565"/>
    </ligand>
</feature>
<feature type="binding site" evidence="1">
    <location>
        <begin position="153"/>
        <end position="156"/>
    </location>
    <ligand>
        <name>GTP</name>
        <dbReference type="ChEBI" id="CHEBI:37565"/>
    </ligand>
</feature>
<dbReference type="EMBL" id="X57926">
    <property type="protein sequence ID" value="CAA41001.1"/>
    <property type="molecule type" value="Genomic_DNA"/>
</dbReference>
<dbReference type="PIR" id="S16308">
    <property type="entry name" value="S16308"/>
</dbReference>
<dbReference type="SMR" id="P25166"/>
<dbReference type="GO" id="GO:0005737">
    <property type="term" value="C:cytoplasm"/>
    <property type="evidence" value="ECO:0007669"/>
    <property type="project" value="UniProtKB-SubCell"/>
</dbReference>
<dbReference type="GO" id="GO:0005525">
    <property type="term" value="F:GTP binding"/>
    <property type="evidence" value="ECO:0007669"/>
    <property type="project" value="UniProtKB-KW"/>
</dbReference>
<dbReference type="GO" id="GO:0003924">
    <property type="term" value="F:GTPase activity"/>
    <property type="evidence" value="ECO:0007669"/>
    <property type="project" value="InterPro"/>
</dbReference>
<dbReference type="GO" id="GO:0003746">
    <property type="term" value="F:translation elongation factor activity"/>
    <property type="evidence" value="ECO:0007669"/>
    <property type="project" value="UniProtKB-KW"/>
</dbReference>
<dbReference type="CDD" id="cd01883">
    <property type="entry name" value="EF1_alpha"/>
    <property type="match status" value="1"/>
</dbReference>
<dbReference type="CDD" id="cd03693">
    <property type="entry name" value="EF1_alpha_II"/>
    <property type="match status" value="1"/>
</dbReference>
<dbReference type="CDD" id="cd03705">
    <property type="entry name" value="EF1_alpha_III"/>
    <property type="match status" value="1"/>
</dbReference>
<dbReference type="FunFam" id="2.40.30.10:FF:000003">
    <property type="entry name" value="Elongation factor 1-alpha"/>
    <property type="match status" value="1"/>
</dbReference>
<dbReference type="FunFam" id="2.40.30.10:FF:000005">
    <property type="entry name" value="Elongation factor 1-alpha"/>
    <property type="match status" value="1"/>
</dbReference>
<dbReference type="FunFam" id="3.40.50.300:FF:000090">
    <property type="entry name" value="Elongation factor 1-alpha"/>
    <property type="match status" value="1"/>
</dbReference>
<dbReference type="Gene3D" id="3.40.50.300">
    <property type="entry name" value="P-loop containing nucleotide triphosphate hydrolases"/>
    <property type="match status" value="1"/>
</dbReference>
<dbReference type="Gene3D" id="2.40.30.10">
    <property type="entry name" value="Translation factors"/>
    <property type="match status" value="2"/>
</dbReference>
<dbReference type="HAMAP" id="MF_00118_A">
    <property type="entry name" value="EF_Tu_A"/>
    <property type="match status" value="1"/>
</dbReference>
<dbReference type="InterPro" id="IPR004161">
    <property type="entry name" value="EFTu-like_2"/>
</dbReference>
<dbReference type="InterPro" id="IPR031157">
    <property type="entry name" value="G_TR_CS"/>
</dbReference>
<dbReference type="InterPro" id="IPR054696">
    <property type="entry name" value="GTP-eEF1A_C"/>
</dbReference>
<dbReference type="InterPro" id="IPR027417">
    <property type="entry name" value="P-loop_NTPase"/>
</dbReference>
<dbReference type="InterPro" id="IPR000795">
    <property type="entry name" value="T_Tr_GTP-bd_dom"/>
</dbReference>
<dbReference type="InterPro" id="IPR050100">
    <property type="entry name" value="TRAFAC_GTPase_members"/>
</dbReference>
<dbReference type="InterPro" id="IPR009000">
    <property type="entry name" value="Transl_B-barrel_sf"/>
</dbReference>
<dbReference type="InterPro" id="IPR009001">
    <property type="entry name" value="Transl_elong_EF1A/Init_IF2_C"/>
</dbReference>
<dbReference type="InterPro" id="IPR004539">
    <property type="entry name" value="Transl_elong_EF1A_euk/arc"/>
</dbReference>
<dbReference type="NCBIfam" id="TIGR00483">
    <property type="entry name" value="EF-1_alpha"/>
    <property type="match status" value="1"/>
</dbReference>
<dbReference type="NCBIfam" id="NF008969">
    <property type="entry name" value="PRK12317.1"/>
    <property type="match status" value="1"/>
</dbReference>
<dbReference type="PANTHER" id="PTHR23115">
    <property type="entry name" value="TRANSLATION FACTOR"/>
    <property type="match status" value="1"/>
</dbReference>
<dbReference type="Pfam" id="PF22594">
    <property type="entry name" value="GTP-eEF1A_C"/>
    <property type="match status" value="1"/>
</dbReference>
<dbReference type="Pfam" id="PF00009">
    <property type="entry name" value="GTP_EFTU"/>
    <property type="match status" value="1"/>
</dbReference>
<dbReference type="Pfam" id="PF03144">
    <property type="entry name" value="GTP_EFTU_D2"/>
    <property type="match status" value="1"/>
</dbReference>
<dbReference type="PRINTS" id="PR00315">
    <property type="entry name" value="ELONGATNFCT"/>
</dbReference>
<dbReference type="SUPFAM" id="SSF50465">
    <property type="entry name" value="EF-Tu/eEF-1alpha/eIF2-gamma C-terminal domain"/>
    <property type="match status" value="1"/>
</dbReference>
<dbReference type="SUPFAM" id="SSF52540">
    <property type="entry name" value="P-loop containing nucleoside triphosphate hydrolases"/>
    <property type="match status" value="1"/>
</dbReference>
<dbReference type="SUPFAM" id="SSF50447">
    <property type="entry name" value="Translation proteins"/>
    <property type="match status" value="1"/>
</dbReference>
<dbReference type="PROSITE" id="PS00301">
    <property type="entry name" value="G_TR_1"/>
    <property type="match status" value="1"/>
</dbReference>
<dbReference type="PROSITE" id="PS51722">
    <property type="entry name" value="G_TR_2"/>
    <property type="match status" value="1"/>
</dbReference>
<keyword id="KW-0963">Cytoplasm</keyword>
<keyword id="KW-0251">Elongation factor</keyword>
<keyword id="KW-0342">GTP-binding</keyword>
<keyword id="KW-0547">Nucleotide-binding</keyword>
<keyword id="KW-0648">Protein biosynthesis</keyword>
<name>EF1A_STYLE</name>
<comment type="function">
    <text>This protein promotes the GTP-dependent binding of aminoacyl-tRNA to the A-site of ribosomes during protein biosynthesis.</text>
</comment>
<comment type="subcellular location">
    <subcellularLocation>
        <location>Cytoplasm</location>
    </subcellularLocation>
</comment>
<comment type="similarity">
    <text evidence="2">Belongs to the TRAFAC class translation factor GTPase superfamily. Classic translation factor GTPase family. EF-Tu/EF-1A subfamily.</text>
</comment>
<proteinExistence type="inferred from homology"/>
<sequence length="446" mass="49596">MPKEKNHLNLVVIGHVDSGKSTSTGHLIYKCGGIDKRTIEKFEKEAAEMGKGSFKYAWVLDKLKAERERGITIDIALWNFETAKSVFTIIDAPGHRDFIKNMITGTSQADAAILIIASGQGEFEAGISKEGQTREHALLAFTMGVKQMIVAVNKMDDKSVNWDQGRFIEIKKELSDYLKKIWLQPRQDPFIPISGWHGDNMLEKSPNMPWFTGSTLIDALDALDQPKRPKDKPLRLPLQDVYKIGGIGTVPVGRVETGLLKPGMVLTFAPMNITTECKSVEMHHESLTEAEPGDNVGFTVKNLSVKDLRRGYVASDSKNDPAKDTTNFLAQVIVLNHPGQIQKGYAPVLDCHTAHIACKFDEIESKVDRRSGKVLEEEPKFIKSGEAALVRMVPQKPMCVEAFNQYPPLGRFAVRDMKQTVAVGVIKEVVKKEQKGMVTKAAQKKK</sequence>
<evidence type="ECO:0000250" key="1"/>
<evidence type="ECO:0000305" key="2"/>
<accession>P25166</accession>
<reference key="1">
    <citation type="journal article" date="1991" name="Mol. Microbiol.">
        <title>Macronuclear and micronuclear configurations of a gene encoding the protein synthesis elongation factor EF 1 alpha in Stylonychia lemnae.</title>
        <authorList>
            <person name="Bierbaum P."/>
            <person name="Doenhoff T."/>
            <person name="Klein A."/>
        </authorList>
    </citation>
    <scope>NUCLEOTIDE SEQUENCE [GENOMIC DNA]</scope>
</reference>
<protein>
    <recommendedName>
        <fullName>Elongation factor 1-alpha</fullName>
        <shortName>EF-1-alpha</shortName>
    </recommendedName>
</protein>
<gene>
    <name type="primary">EFAA</name>
</gene>
<organism>
    <name type="scientific">Stylonychia lemnae</name>
    <name type="common">Ciliate</name>
    <dbReference type="NCBI Taxonomy" id="5949"/>
    <lineage>
        <taxon>Eukaryota</taxon>
        <taxon>Sar</taxon>
        <taxon>Alveolata</taxon>
        <taxon>Ciliophora</taxon>
        <taxon>Intramacronucleata</taxon>
        <taxon>Spirotrichea</taxon>
        <taxon>Stichotrichia</taxon>
        <taxon>Sporadotrichida</taxon>
        <taxon>Oxytrichidae</taxon>
        <taxon>Stylonychinae</taxon>
        <taxon>Stylonychia</taxon>
    </lineage>
</organism>